<proteinExistence type="inferred from homology"/>
<sequence>MKRDYYEVLGVSRSADKDEIKKAYRKLALKYHPDKNPDNKDAEDHFKEVNEAYEVLSNDDKRRRYDQFGHAGVGSSAASGGGGGQYGGGADFSDIFSAFNDMFGGGGGGSQRRRAASGIPGVDLKIRLKLTLEEIAKGVEKTIKIKKQVPCKECNGSGSKTGATETCPTCHGAGEVRQASKTMFGQFVNIAACPTCGGEGRIVKDRCPSCYGEGIKQGEVTVKVNVPAGVQEGNYLTLRGQGNSGPRGGAPGDLIVMIEEKPHELFVRNGDDVIYSLAVSFPDLVLGTKVDVPTLEGAVKLTIPAGTQPETMLRIPGHGIGHLRGSGKGDQYVRVNVYVPKELTQQDKDLLRDLRKSPSIAPEAHSAGGAKSFFEKARDIFG</sequence>
<name>DNAJ_CHLL3</name>
<reference key="1">
    <citation type="submission" date="2005-08" db="EMBL/GenBank/DDBJ databases">
        <title>Complete sequence of Pelodictyon luteolum DSM 273.</title>
        <authorList>
            <consortium name="US DOE Joint Genome Institute"/>
            <person name="Copeland A."/>
            <person name="Lucas S."/>
            <person name="Lapidus A."/>
            <person name="Barry K."/>
            <person name="Detter J.C."/>
            <person name="Glavina T."/>
            <person name="Hammon N."/>
            <person name="Israni S."/>
            <person name="Pitluck S."/>
            <person name="Bryant D."/>
            <person name="Schmutz J."/>
            <person name="Larimer F."/>
            <person name="Land M."/>
            <person name="Kyrpides N."/>
            <person name="Ivanova N."/>
            <person name="Richardson P."/>
        </authorList>
    </citation>
    <scope>NUCLEOTIDE SEQUENCE [LARGE SCALE GENOMIC DNA]</scope>
    <source>
        <strain>DSM 273 / BCRC 81028 / 2530</strain>
    </source>
</reference>
<accession>Q3B2T5</accession>
<dbReference type="EMBL" id="CP000096">
    <property type="protein sequence ID" value="ABB24346.1"/>
    <property type="molecule type" value="Genomic_DNA"/>
</dbReference>
<dbReference type="RefSeq" id="WP_011358218.1">
    <property type="nucleotide sequence ID" value="NC_007512.1"/>
</dbReference>
<dbReference type="SMR" id="Q3B2T5"/>
<dbReference type="STRING" id="319225.Plut_1487"/>
<dbReference type="KEGG" id="plt:Plut_1487"/>
<dbReference type="eggNOG" id="COG0484">
    <property type="taxonomic scope" value="Bacteria"/>
</dbReference>
<dbReference type="HOGENOM" id="CLU_017633_0_7_10"/>
<dbReference type="OrthoDB" id="9779889at2"/>
<dbReference type="Proteomes" id="UP000002709">
    <property type="component" value="Chromosome"/>
</dbReference>
<dbReference type="GO" id="GO:0005737">
    <property type="term" value="C:cytoplasm"/>
    <property type="evidence" value="ECO:0007669"/>
    <property type="project" value="UniProtKB-SubCell"/>
</dbReference>
<dbReference type="GO" id="GO:0005524">
    <property type="term" value="F:ATP binding"/>
    <property type="evidence" value="ECO:0007669"/>
    <property type="project" value="InterPro"/>
</dbReference>
<dbReference type="GO" id="GO:0031072">
    <property type="term" value="F:heat shock protein binding"/>
    <property type="evidence" value="ECO:0007669"/>
    <property type="project" value="InterPro"/>
</dbReference>
<dbReference type="GO" id="GO:0051082">
    <property type="term" value="F:unfolded protein binding"/>
    <property type="evidence" value="ECO:0007669"/>
    <property type="project" value="UniProtKB-UniRule"/>
</dbReference>
<dbReference type="GO" id="GO:0008270">
    <property type="term" value="F:zinc ion binding"/>
    <property type="evidence" value="ECO:0007669"/>
    <property type="project" value="UniProtKB-UniRule"/>
</dbReference>
<dbReference type="GO" id="GO:0051085">
    <property type="term" value="P:chaperone cofactor-dependent protein refolding"/>
    <property type="evidence" value="ECO:0007669"/>
    <property type="project" value="TreeGrafter"/>
</dbReference>
<dbReference type="GO" id="GO:0006260">
    <property type="term" value="P:DNA replication"/>
    <property type="evidence" value="ECO:0007669"/>
    <property type="project" value="UniProtKB-KW"/>
</dbReference>
<dbReference type="GO" id="GO:0042026">
    <property type="term" value="P:protein refolding"/>
    <property type="evidence" value="ECO:0007669"/>
    <property type="project" value="TreeGrafter"/>
</dbReference>
<dbReference type="GO" id="GO:0009408">
    <property type="term" value="P:response to heat"/>
    <property type="evidence" value="ECO:0007669"/>
    <property type="project" value="InterPro"/>
</dbReference>
<dbReference type="CDD" id="cd06257">
    <property type="entry name" value="DnaJ"/>
    <property type="match status" value="1"/>
</dbReference>
<dbReference type="CDD" id="cd10747">
    <property type="entry name" value="DnaJ_C"/>
    <property type="match status" value="1"/>
</dbReference>
<dbReference type="CDD" id="cd10719">
    <property type="entry name" value="DnaJ_zf"/>
    <property type="match status" value="1"/>
</dbReference>
<dbReference type="FunFam" id="1.10.287.110:FF:000034">
    <property type="entry name" value="Chaperone protein DnaJ"/>
    <property type="match status" value="1"/>
</dbReference>
<dbReference type="FunFam" id="2.60.260.20:FF:000005">
    <property type="entry name" value="Chaperone protein dnaJ 1, mitochondrial"/>
    <property type="match status" value="1"/>
</dbReference>
<dbReference type="FunFam" id="2.10.230.10:FF:000002">
    <property type="entry name" value="Molecular chaperone DnaJ"/>
    <property type="match status" value="1"/>
</dbReference>
<dbReference type="Gene3D" id="1.10.287.110">
    <property type="entry name" value="DnaJ domain"/>
    <property type="match status" value="1"/>
</dbReference>
<dbReference type="Gene3D" id="2.10.230.10">
    <property type="entry name" value="Heat shock protein DnaJ, cysteine-rich domain"/>
    <property type="match status" value="1"/>
</dbReference>
<dbReference type="Gene3D" id="2.60.260.20">
    <property type="entry name" value="Urease metallochaperone UreE, N-terminal domain"/>
    <property type="match status" value="2"/>
</dbReference>
<dbReference type="HAMAP" id="MF_01152">
    <property type="entry name" value="DnaJ"/>
    <property type="match status" value="1"/>
</dbReference>
<dbReference type="InterPro" id="IPR012724">
    <property type="entry name" value="DnaJ"/>
</dbReference>
<dbReference type="InterPro" id="IPR002939">
    <property type="entry name" value="DnaJ_C"/>
</dbReference>
<dbReference type="InterPro" id="IPR001623">
    <property type="entry name" value="DnaJ_domain"/>
</dbReference>
<dbReference type="InterPro" id="IPR018253">
    <property type="entry name" value="DnaJ_domain_CS"/>
</dbReference>
<dbReference type="InterPro" id="IPR008971">
    <property type="entry name" value="HSP40/DnaJ_pept-bd"/>
</dbReference>
<dbReference type="InterPro" id="IPR001305">
    <property type="entry name" value="HSP_DnaJ_Cys-rich_dom"/>
</dbReference>
<dbReference type="InterPro" id="IPR036410">
    <property type="entry name" value="HSP_DnaJ_Cys-rich_dom_sf"/>
</dbReference>
<dbReference type="InterPro" id="IPR036869">
    <property type="entry name" value="J_dom_sf"/>
</dbReference>
<dbReference type="NCBIfam" id="TIGR02349">
    <property type="entry name" value="DnaJ_bact"/>
    <property type="match status" value="1"/>
</dbReference>
<dbReference type="NCBIfam" id="NF008035">
    <property type="entry name" value="PRK10767.1"/>
    <property type="match status" value="1"/>
</dbReference>
<dbReference type="NCBIfam" id="NF010874">
    <property type="entry name" value="PRK14281.1"/>
    <property type="match status" value="1"/>
</dbReference>
<dbReference type="PANTHER" id="PTHR43096:SF48">
    <property type="entry name" value="CHAPERONE PROTEIN DNAJ"/>
    <property type="match status" value="1"/>
</dbReference>
<dbReference type="PANTHER" id="PTHR43096">
    <property type="entry name" value="DNAJ HOMOLOG 1, MITOCHONDRIAL-RELATED"/>
    <property type="match status" value="1"/>
</dbReference>
<dbReference type="Pfam" id="PF00226">
    <property type="entry name" value="DnaJ"/>
    <property type="match status" value="1"/>
</dbReference>
<dbReference type="Pfam" id="PF01556">
    <property type="entry name" value="DnaJ_C"/>
    <property type="match status" value="1"/>
</dbReference>
<dbReference type="Pfam" id="PF00684">
    <property type="entry name" value="DnaJ_CXXCXGXG"/>
    <property type="match status" value="1"/>
</dbReference>
<dbReference type="PRINTS" id="PR00625">
    <property type="entry name" value="JDOMAIN"/>
</dbReference>
<dbReference type="SMART" id="SM00271">
    <property type="entry name" value="DnaJ"/>
    <property type="match status" value="1"/>
</dbReference>
<dbReference type="SUPFAM" id="SSF46565">
    <property type="entry name" value="Chaperone J-domain"/>
    <property type="match status" value="1"/>
</dbReference>
<dbReference type="SUPFAM" id="SSF57938">
    <property type="entry name" value="DnaJ/Hsp40 cysteine-rich domain"/>
    <property type="match status" value="1"/>
</dbReference>
<dbReference type="SUPFAM" id="SSF49493">
    <property type="entry name" value="HSP40/DnaJ peptide-binding domain"/>
    <property type="match status" value="2"/>
</dbReference>
<dbReference type="PROSITE" id="PS00636">
    <property type="entry name" value="DNAJ_1"/>
    <property type="match status" value="1"/>
</dbReference>
<dbReference type="PROSITE" id="PS50076">
    <property type="entry name" value="DNAJ_2"/>
    <property type="match status" value="1"/>
</dbReference>
<dbReference type="PROSITE" id="PS51188">
    <property type="entry name" value="ZF_CR"/>
    <property type="match status" value="1"/>
</dbReference>
<gene>
    <name evidence="1" type="primary">dnaJ</name>
    <name type="ordered locus">Plut_1487</name>
</gene>
<feature type="chain" id="PRO_1000085242" description="Chaperone protein DnaJ">
    <location>
        <begin position="1"/>
        <end position="382"/>
    </location>
</feature>
<feature type="domain" description="J" evidence="1">
    <location>
        <begin position="4"/>
        <end position="69"/>
    </location>
</feature>
<feature type="repeat" description="CXXCXGXG motif">
    <location>
        <begin position="151"/>
        <end position="158"/>
    </location>
</feature>
<feature type="repeat" description="CXXCXGXG motif">
    <location>
        <begin position="167"/>
        <end position="174"/>
    </location>
</feature>
<feature type="repeat" description="CXXCXGXG motif">
    <location>
        <begin position="193"/>
        <end position="200"/>
    </location>
</feature>
<feature type="repeat" description="CXXCXGXG motif">
    <location>
        <begin position="207"/>
        <end position="214"/>
    </location>
</feature>
<feature type="zinc finger region" description="CR-type" evidence="1">
    <location>
        <begin position="138"/>
        <end position="219"/>
    </location>
</feature>
<feature type="binding site" evidence="1">
    <location>
        <position position="151"/>
    </location>
    <ligand>
        <name>Zn(2+)</name>
        <dbReference type="ChEBI" id="CHEBI:29105"/>
        <label>1</label>
    </ligand>
</feature>
<feature type="binding site" evidence="1">
    <location>
        <position position="154"/>
    </location>
    <ligand>
        <name>Zn(2+)</name>
        <dbReference type="ChEBI" id="CHEBI:29105"/>
        <label>1</label>
    </ligand>
</feature>
<feature type="binding site" evidence="1">
    <location>
        <position position="167"/>
    </location>
    <ligand>
        <name>Zn(2+)</name>
        <dbReference type="ChEBI" id="CHEBI:29105"/>
        <label>2</label>
    </ligand>
</feature>
<feature type="binding site" evidence="1">
    <location>
        <position position="170"/>
    </location>
    <ligand>
        <name>Zn(2+)</name>
        <dbReference type="ChEBI" id="CHEBI:29105"/>
        <label>2</label>
    </ligand>
</feature>
<feature type="binding site" evidence="1">
    <location>
        <position position="193"/>
    </location>
    <ligand>
        <name>Zn(2+)</name>
        <dbReference type="ChEBI" id="CHEBI:29105"/>
        <label>2</label>
    </ligand>
</feature>
<feature type="binding site" evidence="1">
    <location>
        <position position="196"/>
    </location>
    <ligand>
        <name>Zn(2+)</name>
        <dbReference type="ChEBI" id="CHEBI:29105"/>
        <label>2</label>
    </ligand>
</feature>
<feature type="binding site" evidence="1">
    <location>
        <position position="207"/>
    </location>
    <ligand>
        <name>Zn(2+)</name>
        <dbReference type="ChEBI" id="CHEBI:29105"/>
        <label>1</label>
    </ligand>
</feature>
<feature type="binding site" evidence="1">
    <location>
        <position position="210"/>
    </location>
    <ligand>
        <name>Zn(2+)</name>
        <dbReference type="ChEBI" id="CHEBI:29105"/>
        <label>1</label>
    </ligand>
</feature>
<comment type="function">
    <text evidence="1">Participates actively in the response to hyperosmotic and heat shock by preventing the aggregation of stress-denatured proteins and by disaggregating proteins, also in an autonomous, DnaK-independent fashion. Unfolded proteins bind initially to DnaJ; upon interaction with the DnaJ-bound protein, DnaK hydrolyzes its bound ATP, resulting in the formation of a stable complex. GrpE releases ADP from DnaK; ATP binding to DnaK triggers the release of the substrate protein, thus completing the reaction cycle. Several rounds of ATP-dependent interactions between DnaJ, DnaK and GrpE are required for fully efficient folding. Also involved, together with DnaK and GrpE, in the DNA replication of plasmids through activation of initiation proteins.</text>
</comment>
<comment type="cofactor">
    <cofactor evidence="1">
        <name>Zn(2+)</name>
        <dbReference type="ChEBI" id="CHEBI:29105"/>
    </cofactor>
    <text evidence="1">Binds 2 Zn(2+) ions per monomer.</text>
</comment>
<comment type="subunit">
    <text evidence="1">Homodimer.</text>
</comment>
<comment type="subcellular location">
    <subcellularLocation>
        <location evidence="1">Cytoplasm</location>
    </subcellularLocation>
</comment>
<comment type="domain">
    <text evidence="1">The J domain is necessary and sufficient to stimulate DnaK ATPase activity. Zinc center 1 plays an important role in the autonomous, DnaK-independent chaperone activity of DnaJ. Zinc center 2 is essential for interaction with DnaK and for DnaJ activity.</text>
</comment>
<comment type="similarity">
    <text evidence="1">Belongs to the DnaJ family.</text>
</comment>
<protein>
    <recommendedName>
        <fullName evidence="1">Chaperone protein DnaJ</fullName>
    </recommendedName>
</protein>
<evidence type="ECO:0000255" key="1">
    <source>
        <dbReference type="HAMAP-Rule" id="MF_01152"/>
    </source>
</evidence>
<keyword id="KW-0143">Chaperone</keyword>
<keyword id="KW-0963">Cytoplasm</keyword>
<keyword id="KW-0235">DNA replication</keyword>
<keyword id="KW-0479">Metal-binding</keyword>
<keyword id="KW-1185">Reference proteome</keyword>
<keyword id="KW-0677">Repeat</keyword>
<keyword id="KW-0346">Stress response</keyword>
<keyword id="KW-0862">Zinc</keyword>
<keyword id="KW-0863">Zinc-finger</keyword>
<organism>
    <name type="scientific">Chlorobium luteolum (strain DSM 273 / BCRC 81028 / 2530)</name>
    <name type="common">Pelodictyon luteolum</name>
    <dbReference type="NCBI Taxonomy" id="319225"/>
    <lineage>
        <taxon>Bacteria</taxon>
        <taxon>Pseudomonadati</taxon>
        <taxon>Chlorobiota</taxon>
        <taxon>Chlorobiia</taxon>
        <taxon>Chlorobiales</taxon>
        <taxon>Chlorobiaceae</taxon>
        <taxon>Chlorobium/Pelodictyon group</taxon>
        <taxon>Pelodictyon</taxon>
    </lineage>
</organism>